<comment type="function">
    <text evidence="1">Catalyzes the formation of acetyl phosphate from acetate and ATP. Can also catalyze the reverse reaction.</text>
</comment>
<comment type="catalytic activity">
    <reaction evidence="1">
        <text>acetate + ATP = acetyl phosphate + ADP</text>
        <dbReference type="Rhea" id="RHEA:11352"/>
        <dbReference type="ChEBI" id="CHEBI:22191"/>
        <dbReference type="ChEBI" id="CHEBI:30089"/>
        <dbReference type="ChEBI" id="CHEBI:30616"/>
        <dbReference type="ChEBI" id="CHEBI:456216"/>
        <dbReference type="EC" id="2.7.2.1"/>
    </reaction>
</comment>
<comment type="cofactor">
    <cofactor evidence="1">
        <name>Mg(2+)</name>
        <dbReference type="ChEBI" id="CHEBI:18420"/>
    </cofactor>
    <cofactor evidence="1">
        <name>Mn(2+)</name>
        <dbReference type="ChEBI" id="CHEBI:29035"/>
    </cofactor>
    <text evidence="1">Mg(2+). Can also accept Mn(2+).</text>
</comment>
<comment type="pathway">
    <text evidence="1">Metabolic intermediate biosynthesis; acetyl-CoA biosynthesis; acetyl-CoA from acetate: step 1/2.</text>
</comment>
<comment type="subunit">
    <text evidence="1">Homodimer.</text>
</comment>
<comment type="subcellular location">
    <subcellularLocation>
        <location evidence="1">Cytoplasm</location>
    </subcellularLocation>
</comment>
<comment type="similarity">
    <text evidence="1">Belongs to the acetokinase family.</text>
</comment>
<organism>
    <name type="scientific">Borrelia turicatae (strain 91E135)</name>
    <dbReference type="NCBI Taxonomy" id="314724"/>
    <lineage>
        <taxon>Bacteria</taxon>
        <taxon>Pseudomonadati</taxon>
        <taxon>Spirochaetota</taxon>
        <taxon>Spirochaetia</taxon>
        <taxon>Spirochaetales</taxon>
        <taxon>Borreliaceae</taxon>
        <taxon>Borrelia</taxon>
    </lineage>
</organism>
<dbReference type="EC" id="2.7.2.1" evidence="1"/>
<dbReference type="EMBL" id="CP000049">
    <property type="protein sequence ID" value="AAX17942.1"/>
    <property type="molecule type" value="Genomic_DNA"/>
</dbReference>
<dbReference type="RefSeq" id="WP_011772560.1">
    <property type="nucleotide sequence ID" value="NC_008710.1"/>
</dbReference>
<dbReference type="SMR" id="A1R050"/>
<dbReference type="KEGG" id="btu:BT0622"/>
<dbReference type="eggNOG" id="COG0282">
    <property type="taxonomic scope" value="Bacteria"/>
</dbReference>
<dbReference type="HOGENOM" id="CLU_020352_0_1_12"/>
<dbReference type="UniPathway" id="UPA00340">
    <property type="reaction ID" value="UER00458"/>
</dbReference>
<dbReference type="Proteomes" id="UP000001205">
    <property type="component" value="Chromosome"/>
</dbReference>
<dbReference type="GO" id="GO:0005737">
    <property type="term" value="C:cytoplasm"/>
    <property type="evidence" value="ECO:0007669"/>
    <property type="project" value="UniProtKB-SubCell"/>
</dbReference>
<dbReference type="GO" id="GO:0008776">
    <property type="term" value="F:acetate kinase activity"/>
    <property type="evidence" value="ECO:0007669"/>
    <property type="project" value="UniProtKB-UniRule"/>
</dbReference>
<dbReference type="GO" id="GO:0005524">
    <property type="term" value="F:ATP binding"/>
    <property type="evidence" value="ECO:0007669"/>
    <property type="project" value="UniProtKB-KW"/>
</dbReference>
<dbReference type="GO" id="GO:0000287">
    <property type="term" value="F:magnesium ion binding"/>
    <property type="evidence" value="ECO:0007669"/>
    <property type="project" value="UniProtKB-UniRule"/>
</dbReference>
<dbReference type="GO" id="GO:0006083">
    <property type="term" value="P:acetate metabolic process"/>
    <property type="evidence" value="ECO:0007669"/>
    <property type="project" value="TreeGrafter"/>
</dbReference>
<dbReference type="GO" id="GO:0006085">
    <property type="term" value="P:acetyl-CoA biosynthetic process"/>
    <property type="evidence" value="ECO:0007669"/>
    <property type="project" value="UniProtKB-UniRule"/>
</dbReference>
<dbReference type="CDD" id="cd24010">
    <property type="entry name" value="ASKHA_NBD_AcK_PK"/>
    <property type="match status" value="1"/>
</dbReference>
<dbReference type="Gene3D" id="3.30.420.40">
    <property type="match status" value="2"/>
</dbReference>
<dbReference type="HAMAP" id="MF_00020">
    <property type="entry name" value="Acetate_kinase"/>
    <property type="match status" value="1"/>
</dbReference>
<dbReference type="InterPro" id="IPR004372">
    <property type="entry name" value="Ac/propionate_kinase"/>
</dbReference>
<dbReference type="InterPro" id="IPR000890">
    <property type="entry name" value="Aliphatic_acid_kin_short-chain"/>
</dbReference>
<dbReference type="InterPro" id="IPR023865">
    <property type="entry name" value="Aliphatic_acid_kinase_CS"/>
</dbReference>
<dbReference type="InterPro" id="IPR043129">
    <property type="entry name" value="ATPase_NBD"/>
</dbReference>
<dbReference type="NCBIfam" id="TIGR00016">
    <property type="entry name" value="ackA"/>
    <property type="match status" value="1"/>
</dbReference>
<dbReference type="PANTHER" id="PTHR21060">
    <property type="entry name" value="ACETATE KINASE"/>
    <property type="match status" value="1"/>
</dbReference>
<dbReference type="PANTHER" id="PTHR21060:SF15">
    <property type="entry name" value="ACETATE KINASE-RELATED"/>
    <property type="match status" value="1"/>
</dbReference>
<dbReference type="Pfam" id="PF00871">
    <property type="entry name" value="Acetate_kinase"/>
    <property type="match status" value="1"/>
</dbReference>
<dbReference type="PIRSF" id="PIRSF000722">
    <property type="entry name" value="Acetate_prop_kin"/>
    <property type="match status" value="1"/>
</dbReference>
<dbReference type="PRINTS" id="PR00471">
    <property type="entry name" value="ACETATEKNASE"/>
</dbReference>
<dbReference type="SUPFAM" id="SSF53067">
    <property type="entry name" value="Actin-like ATPase domain"/>
    <property type="match status" value="2"/>
</dbReference>
<dbReference type="PROSITE" id="PS01075">
    <property type="entry name" value="ACETATE_KINASE_1"/>
    <property type="match status" value="1"/>
</dbReference>
<dbReference type="PROSITE" id="PS01076">
    <property type="entry name" value="ACETATE_KINASE_2"/>
    <property type="match status" value="1"/>
</dbReference>
<reference key="1">
    <citation type="submission" date="2004-12" db="EMBL/GenBank/DDBJ databases">
        <title>The genome sequence of Borrelia hermsii and Borrelia turicatae: comparative analysis of two agents of endemic N. America relapsing fever.</title>
        <authorList>
            <person name="Porcella S.F."/>
            <person name="Raffel S.J."/>
            <person name="Schrumpf M.E."/>
            <person name="Montgomery B."/>
            <person name="Smith T."/>
            <person name="Schwan T.G."/>
        </authorList>
    </citation>
    <scope>NUCLEOTIDE SEQUENCE [LARGE SCALE GENOMIC DNA]</scope>
    <source>
        <strain>91E135</strain>
    </source>
</reference>
<sequence length="404" mass="45453">MKILTINTGSSSLKFTLYKHKNTQILVSGTIEKIKTKKSIIKIKTKNGLLEKTDKHIKSHKEALKQLIRILTNKKLKIIENPDEIQGIGHRIVHGGPSFKNSTILNTNTLSELKKISKLAPLHNPIAIKVIEITLKIFPNAKQVLCFDTSWHKTMNENAFLYATPYSWYKDYNIRKYGFHGLSYSYITKRVATILNKPKEDLNLIILHLGNGSSINAVKKGLSYDTSMGLTPLEGLVMGTRSGDIDPAIIPLMSKLLNKTPKKIEEILNKQSGMLGISLKSNDLRDIWEGVKNNEYNSKLAVEIMAYRIKKYIGSYLAVLDFNIDAIIFTAGIGVTDYGIRELSLKGFEKIGIEIDPQKNNLARDKHTESDISSEKSKTKILVIPTNEELTILEDTYNLITKPS</sequence>
<evidence type="ECO:0000255" key="1">
    <source>
        <dbReference type="HAMAP-Rule" id="MF_00020"/>
    </source>
</evidence>
<accession>A1R050</accession>
<feature type="chain" id="PRO_1000116793" description="Acetate kinase">
    <location>
        <begin position="1"/>
        <end position="404"/>
    </location>
</feature>
<feature type="active site" description="Proton donor/acceptor" evidence="1">
    <location>
        <position position="148"/>
    </location>
</feature>
<feature type="binding site" evidence="1">
    <location>
        <position position="7"/>
    </location>
    <ligand>
        <name>Mg(2+)</name>
        <dbReference type="ChEBI" id="CHEBI:18420"/>
    </ligand>
</feature>
<feature type="binding site" evidence="1">
    <location>
        <position position="14"/>
    </location>
    <ligand>
        <name>ATP</name>
        <dbReference type="ChEBI" id="CHEBI:30616"/>
    </ligand>
</feature>
<feature type="binding site" evidence="1">
    <location>
        <position position="91"/>
    </location>
    <ligand>
        <name>substrate</name>
    </ligand>
</feature>
<feature type="binding site" evidence="1">
    <location>
        <begin position="208"/>
        <end position="212"/>
    </location>
    <ligand>
        <name>ATP</name>
        <dbReference type="ChEBI" id="CHEBI:30616"/>
    </ligand>
</feature>
<feature type="binding site" evidence="1">
    <location>
        <begin position="283"/>
        <end position="285"/>
    </location>
    <ligand>
        <name>ATP</name>
        <dbReference type="ChEBI" id="CHEBI:30616"/>
    </ligand>
</feature>
<feature type="binding site" evidence="1">
    <location>
        <position position="388"/>
    </location>
    <ligand>
        <name>Mg(2+)</name>
        <dbReference type="ChEBI" id="CHEBI:18420"/>
    </ligand>
</feature>
<feature type="site" description="Transition state stabilizer" evidence="1">
    <location>
        <position position="180"/>
    </location>
</feature>
<feature type="site" description="Transition state stabilizer" evidence="1">
    <location>
        <position position="241"/>
    </location>
</feature>
<keyword id="KW-0067">ATP-binding</keyword>
<keyword id="KW-0963">Cytoplasm</keyword>
<keyword id="KW-0418">Kinase</keyword>
<keyword id="KW-0460">Magnesium</keyword>
<keyword id="KW-0479">Metal-binding</keyword>
<keyword id="KW-0547">Nucleotide-binding</keyword>
<keyword id="KW-1185">Reference proteome</keyword>
<keyword id="KW-0808">Transferase</keyword>
<gene>
    <name evidence="1" type="primary">ackA</name>
    <name type="ordered locus">BT0622</name>
</gene>
<protein>
    <recommendedName>
        <fullName evidence="1">Acetate kinase</fullName>
        <ecNumber evidence="1">2.7.2.1</ecNumber>
    </recommendedName>
    <alternativeName>
        <fullName evidence="1">Acetokinase</fullName>
    </alternativeName>
</protein>
<proteinExistence type="inferred from homology"/>
<name>ACKA_BORT9</name>